<dbReference type="EMBL" id="Z49703">
    <property type="protein sequence ID" value="CAA89767.1"/>
    <property type="molecule type" value="Genomic_DNA"/>
</dbReference>
<dbReference type="PIR" id="S54557">
    <property type="entry name" value="S54557"/>
</dbReference>
<dbReference type="DIP" id="DIP-7154N"/>
<dbReference type="IntAct" id="Q04674">
    <property type="interactions" value="1"/>
</dbReference>
<dbReference type="MINT" id="Q04674"/>
<dbReference type="STRING" id="4932.YMR057C"/>
<dbReference type="PaxDb" id="4932-YMR057C"/>
<dbReference type="EnsemblFungi" id="YMR057C_mRNA">
    <property type="protein sequence ID" value="YMR057C"/>
    <property type="gene ID" value="YMR057C"/>
</dbReference>
<dbReference type="AGR" id="SGD:S000004661"/>
<dbReference type="SGD" id="S000004661">
    <property type="gene designation" value="YMR057C"/>
</dbReference>
<dbReference type="HOGENOM" id="CLU_2017009_0_0_1"/>
<name>YMU7_YEAST</name>
<feature type="chain" id="PRO_0000203278" description="Putative uncharacterized protein YMR057C">
    <location>
        <begin position="1"/>
        <end position="123"/>
    </location>
</feature>
<gene>
    <name type="ordered locus">YMR057C</name>
    <name type="ORF">YM9796.10C</name>
</gene>
<organism>
    <name type="scientific">Saccharomyces cerevisiae (strain ATCC 204508 / S288c)</name>
    <name type="common">Baker's yeast</name>
    <dbReference type="NCBI Taxonomy" id="559292"/>
    <lineage>
        <taxon>Eukaryota</taxon>
        <taxon>Fungi</taxon>
        <taxon>Dikarya</taxon>
        <taxon>Ascomycota</taxon>
        <taxon>Saccharomycotina</taxon>
        <taxon>Saccharomycetes</taxon>
        <taxon>Saccharomycetales</taxon>
        <taxon>Saccharomycetaceae</taxon>
        <taxon>Saccharomyces</taxon>
    </lineage>
</organism>
<accession>Q04674</accession>
<proteinExistence type="uncertain"/>
<reference key="1">
    <citation type="journal article" date="1997" name="Nature">
        <title>The nucleotide sequence of Saccharomyces cerevisiae chromosome XIII.</title>
        <authorList>
            <person name="Bowman S."/>
            <person name="Churcher C.M."/>
            <person name="Badcock K."/>
            <person name="Brown D."/>
            <person name="Chillingworth T."/>
            <person name="Connor R."/>
            <person name="Dedman K."/>
            <person name="Devlin K."/>
            <person name="Gentles S."/>
            <person name="Hamlin N."/>
            <person name="Hunt S."/>
            <person name="Jagels K."/>
            <person name="Lye G."/>
            <person name="Moule S."/>
            <person name="Odell C."/>
            <person name="Pearson D."/>
            <person name="Rajandream M.A."/>
            <person name="Rice P."/>
            <person name="Skelton J."/>
            <person name="Walsh S.V."/>
            <person name="Whitehead S."/>
            <person name="Barrell B.G."/>
        </authorList>
    </citation>
    <scope>NUCLEOTIDE SEQUENCE [LARGE SCALE GENOMIC DNA]</scope>
    <source>
        <strain>ATCC 204508 / S288c</strain>
    </source>
</reference>
<reference key="2">
    <citation type="journal article" date="2014" name="G3 (Bethesda)">
        <title>The reference genome sequence of Saccharomyces cerevisiae: Then and now.</title>
        <authorList>
            <person name="Engel S.R."/>
            <person name="Dietrich F.S."/>
            <person name="Fisk D.G."/>
            <person name="Binkley G."/>
            <person name="Balakrishnan R."/>
            <person name="Costanzo M.C."/>
            <person name="Dwight S.S."/>
            <person name="Hitz B.C."/>
            <person name="Karra K."/>
            <person name="Nash R.S."/>
            <person name="Weng S."/>
            <person name="Wong E.D."/>
            <person name="Lloyd P."/>
            <person name="Skrzypek M.S."/>
            <person name="Miyasato S.R."/>
            <person name="Simison M."/>
            <person name="Cherry J.M."/>
        </authorList>
    </citation>
    <scope>GENOME REANNOTATION</scope>
    <source>
        <strain>ATCC 204508 / S288c</strain>
    </source>
</reference>
<sequence length="123" mass="14293">MACLHTYIYIYIYIYNRTTCTRPWHTPSKDRLFECILHFLSQLARIRAPANGCTFEDGPCLLGLPKSASPSSRRRVFIGDSAYCRDHPRRNGLIRTRKVKLISVGRRVSFFSRRRPFIGPETV</sequence>
<comment type="miscellaneous">
    <text evidence="1">Partially overlaps AAC1.</text>
</comment>
<comment type="caution">
    <text evidence="2">Product of a dubious gene prediction unlikely to encode a functional protein. Because of that it is not part of the S.cerevisiae S288c complete/reference proteome set.</text>
</comment>
<protein>
    <recommendedName>
        <fullName>Putative uncharacterized protein YMR057C</fullName>
    </recommendedName>
</protein>
<evidence type="ECO:0000305" key="1"/>
<evidence type="ECO:0000305" key="2">
    <source>
    </source>
</evidence>